<accession>Q7XEM4</accession>
<accession>Q0IXP5</accession>
<evidence type="ECO:0000250" key="1">
    <source>
        <dbReference type="UniProtKB" id="Q38860"/>
    </source>
</evidence>
<evidence type="ECO:0000255" key="2"/>
<evidence type="ECO:0000269" key="3">
    <source ref="5"/>
</evidence>
<evidence type="ECO:0000303" key="4">
    <source ref="5"/>
</evidence>
<evidence type="ECO:0000305" key="5"/>
<evidence type="ECO:0000312" key="6">
    <source>
        <dbReference type="EMBL" id="AAP53764.1"/>
    </source>
</evidence>
<evidence type="ECO:0000312" key="7">
    <source>
        <dbReference type="EMBL" id="BAT10854.1"/>
    </source>
</evidence>
<name>KCS20_ORYSJ</name>
<reference key="1">
    <citation type="journal article" date="2003" name="Science">
        <title>In-depth view of structure, activity, and evolution of rice chromosome 10.</title>
        <authorList>
            <person name="Yu Y."/>
            <person name="Rambo T."/>
            <person name="Currie J."/>
            <person name="Saski C."/>
            <person name="Kim H.-R."/>
            <person name="Collura K."/>
            <person name="Thompson S."/>
            <person name="Simmons J."/>
            <person name="Yang T.-J."/>
            <person name="Nah G."/>
            <person name="Patel A.J."/>
            <person name="Thurmond S."/>
            <person name="Henry D."/>
            <person name="Oates R."/>
            <person name="Palmer M."/>
            <person name="Pries G."/>
            <person name="Gibson J."/>
            <person name="Anderson H."/>
            <person name="Paradkar M."/>
            <person name="Crane L."/>
            <person name="Dale J."/>
            <person name="Carver M.B."/>
            <person name="Wood T."/>
            <person name="Frisch D."/>
            <person name="Engler F."/>
            <person name="Soderlund C."/>
            <person name="Palmer L.E."/>
            <person name="Teytelman L."/>
            <person name="Nascimento L."/>
            <person name="De la Bastide M."/>
            <person name="Spiegel L."/>
            <person name="Ware D."/>
            <person name="O'Shaughnessy A."/>
            <person name="Dike S."/>
            <person name="Dedhia N."/>
            <person name="Preston R."/>
            <person name="Huang E."/>
            <person name="Ferraro K."/>
            <person name="Kuit K."/>
            <person name="Miller B."/>
            <person name="Zutavern T."/>
            <person name="Katzenberger F."/>
            <person name="Muller S."/>
            <person name="Balija V."/>
            <person name="Martienssen R.A."/>
            <person name="Stein L."/>
            <person name="Minx P."/>
            <person name="Johnson D."/>
            <person name="Cordum H."/>
            <person name="Mardis E."/>
            <person name="Cheng Z."/>
            <person name="Jiang J."/>
            <person name="Wilson R."/>
            <person name="McCombie W.R."/>
            <person name="Wing R.A."/>
            <person name="Yuan Q."/>
            <person name="Ouyang S."/>
            <person name="Liu J."/>
            <person name="Jones K.M."/>
            <person name="Gansberger K."/>
            <person name="Moffat K."/>
            <person name="Hill J."/>
            <person name="Tsitrin T."/>
            <person name="Overton L."/>
            <person name="Bera J."/>
            <person name="Kim M."/>
            <person name="Jin S."/>
            <person name="Tallon L."/>
            <person name="Ciecko A."/>
            <person name="Pai G."/>
            <person name="Van Aken S."/>
            <person name="Utterback T."/>
            <person name="Reidmuller S."/>
            <person name="Bormann J."/>
            <person name="Feldblyum T."/>
            <person name="Hsiao J."/>
            <person name="Zismann V."/>
            <person name="Blunt S."/>
            <person name="de Vazeille A.R."/>
            <person name="Shaffer T."/>
            <person name="Koo H."/>
            <person name="Suh B."/>
            <person name="Yang Q."/>
            <person name="Haas B."/>
            <person name="Peterson J."/>
            <person name="Pertea M."/>
            <person name="Volfovsky N."/>
            <person name="Wortman J."/>
            <person name="White O."/>
            <person name="Salzberg S.L."/>
            <person name="Fraser C.M."/>
            <person name="Buell C.R."/>
            <person name="Messing J."/>
            <person name="Song R."/>
            <person name="Fuks G."/>
            <person name="Llaca V."/>
            <person name="Kovchak S."/>
            <person name="Young S."/>
            <person name="Bowers J.E."/>
            <person name="Paterson A.H."/>
            <person name="Johns M.A."/>
            <person name="Mao L."/>
            <person name="Pan H."/>
            <person name="Dean R.A."/>
        </authorList>
    </citation>
    <scope>NUCLEOTIDE SEQUENCE [LARGE SCALE GENOMIC DNA]</scope>
    <source>
        <strain>cv. Nipponbare</strain>
    </source>
</reference>
<reference key="2">
    <citation type="journal article" date="2005" name="Nature">
        <title>The map-based sequence of the rice genome.</title>
        <authorList>
            <consortium name="International rice genome sequencing project (IRGSP)"/>
        </authorList>
    </citation>
    <scope>NUCLEOTIDE SEQUENCE [LARGE SCALE GENOMIC DNA]</scope>
    <source>
        <strain>cv. Nipponbare</strain>
    </source>
</reference>
<reference key="3">
    <citation type="journal article" date="2008" name="Nucleic Acids Res.">
        <title>The rice annotation project database (RAP-DB): 2008 update.</title>
        <authorList>
            <consortium name="The rice annotation project (RAP)"/>
        </authorList>
    </citation>
    <scope>GENOME REANNOTATION</scope>
    <source>
        <strain>cv. Nipponbare</strain>
    </source>
</reference>
<reference key="4">
    <citation type="journal article" date="2013" name="Rice">
        <title>Improvement of the Oryza sativa Nipponbare reference genome using next generation sequence and optical map data.</title>
        <authorList>
            <person name="Kawahara Y."/>
            <person name="de la Bastide M."/>
            <person name="Hamilton J.P."/>
            <person name="Kanamori H."/>
            <person name="McCombie W.R."/>
            <person name="Ouyang S."/>
            <person name="Schwartz D.C."/>
            <person name="Tanaka T."/>
            <person name="Wu J."/>
            <person name="Zhou S."/>
            <person name="Childs K.L."/>
            <person name="Davidson R.M."/>
            <person name="Lin H."/>
            <person name="Quesada-Ocampo L."/>
            <person name="Vaillancourt B."/>
            <person name="Sakai H."/>
            <person name="Lee S.S."/>
            <person name="Kim J."/>
            <person name="Numa H."/>
            <person name="Itoh T."/>
            <person name="Buell C.R."/>
            <person name="Matsumoto T."/>
        </authorList>
    </citation>
    <scope>GENOME REANNOTATION</scope>
    <source>
        <strain>cv. Nipponbare</strain>
    </source>
</reference>
<reference key="5">
    <citation type="journal article" date="2017" name="Plant Mol. Biol. Rep.">
        <title>Characterization and fine mapping of SFL1, a gene controlling screw flag leaf in rice.</title>
        <authorList>
            <person name="Alamin M."/>
            <person name="Zeng D.D."/>
            <person name="Qin R."/>
            <person name="Sultana M.H."/>
            <person name="Jin X.L."/>
            <person name="Shi C.H."/>
        </authorList>
    </citation>
    <scope>FUNCTION</scope>
    <scope>TISSUE SPECIFICITY</scope>
    <scope>MUTAGENESIS OF ALA-406</scope>
</reference>
<dbReference type="EC" id="2.3.1.199" evidence="1"/>
<dbReference type="EMBL" id="DP000086">
    <property type="protein sequence ID" value="AAP53764.1"/>
    <property type="molecule type" value="Genomic_DNA"/>
</dbReference>
<dbReference type="EMBL" id="AP008216">
    <property type="protein sequence ID" value="BAF26520.2"/>
    <property type="status" value="ALT_SEQ"/>
    <property type="molecule type" value="Genomic_DNA"/>
</dbReference>
<dbReference type="EMBL" id="AP014966">
    <property type="protein sequence ID" value="BAT10854.1"/>
    <property type="molecule type" value="Genomic_DNA"/>
</dbReference>
<dbReference type="RefSeq" id="XP_015614625.1">
    <property type="nucleotide sequence ID" value="XM_015759139.1"/>
</dbReference>
<dbReference type="SMR" id="Q7XEM4"/>
<dbReference type="FunCoup" id="Q7XEM4">
    <property type="interactions" value="157"/>
</dbReference>
<dbReference type="STRING" id="39947.Q7XEM4"/>
<dbReference type="PaxDb" id="39947-Q7XEM4"/>
<dbReference type="EnsemblPlants" id="Os10t0416200-01">
    <property type="protein sequence ID" value="Os10t0416200-01"/>
    <property type="gene ID" value="Os10g0416200"/>
</dbReference>
<dbReference type="Gramene" id="Os10t0416200-01">
    <property type="protein sequence ID" value="Os10t0416200-01"/>
    <property type="gene ID" value="Os10g0416200"/>
</dbReference>
<dbReference type="KEGG" id="dosa:Os10g0416200"/>
<dbReference type="eggNOG" id="ENOG502QPKZ">
    <property type="taxonomic scope" value="Eukaryota"/>
</dbReference>
<dbReference type="HOGENOM" id="CLU_013238_5_1_1"/>
<dbReference type="InParanoid" id="Q7XEM4"/>
<dbReference type="OrthoDB" id="628111at2759"/>
<dbReference type="Proteomes" id="UP000000763">
    <property type="component" value="Chromosome 10"/>
</dbReference>
<dbReference type="Proteomes" id="UP000059680">
    <property type="component" value="Chromosome 10"/>
</dbReference>
<dbReference type="GO" id="GO:0016020">
    <property type="term" value="C:membrane"/>
    <property type="evidence" value="ECO:0007669"/>
    <property type="project" value="UniProtKB-SubCell"/>
</dbReference>
<dbReference type="GO" id="GO:0009922">
    <property type="term" value="F:fatty acid elongase activity"/>
    <property type="evidence" value="ECO:0007669"/>
    <property type="project" value="UniProtKB-EC"/>
</dbReference>
<dbReference type="GO" id="GO:0006633">
    <property type="term" value="P:fatty acid biosynthetic process"/>
    <property type="evidence" value="ECO:0007669"/>
    <property type="project" value="InterPro"/>
</dbReference>
<dbReference type="CDD" id="cd00831">
    <property type="entry name" value="CHS_like"/>
    <property type="match status" value="1"/>
</dbReference>
<dbReference type="Gene3D" id="3.40.47.10">
    <property type="match status" value="1"/>
</dbReference>
<dbReference type="InterPro" id="IPR012392">
    <property type="entry name" value="3-ktacl-CoA_syn"/>
</dbReference>
<dbReference type="InterPro" id="IPR013747">
    <property type="entry name" value="ACP_syn_III_C"/>
</dbReference>
<dbReference type="InterPro" id="IPR013601">
    <property type="entry name" value="FAE1_typ3_polyketide_synth"/>
</dbReference>
<dbReference type="InterPro" id="IPR016039">
    <property type="entry name" value="Thiolase-like"/>
</dbReference>
<dbReference type="PANTHER" id="PTHR31561">
    <property type="entry name" value="3-KETOACYL-COA SYNTHASE"/>
    <property type="match status" value="1"/>
</dbReference>
<dbReference type="Pfam" id="PF08541">
    <property type="entry name" value="ACP_syn_III_C"/>
    <property type="match status" value="1"/>
</dbReference>
<dbReference type="Pfam" id="PF08392">
    <property type="entry name" value="FAE1_CUT1_RppA"/>
    <property type="match status" value="1"/>
</dbReference>
<dbReference type="PIRSF" id="PIRSF036417">
    <property type="entry name" value="3-ktacl-CoA_syn"/>
    <property type="match status" value="1"/>
</dbReference>
<dbReference type="SUPFAM" id="SSF53901">
    <property type="entry name" value="Thiolase-like"/>
    <property type="match status" value="2"/>
</dbReference>
<organism>
    <name type="scientific">Oryza sativa subsp. japonica</name>
    <name type="common">Rice</name>
    <dbReference type="NCBI Taxonomy" id="39947"/>
    <lineage>
        <taxon>Eukaryota</taxon>
        <taxon>Viridiplantae</taxon>
        <taxon>Streptophyta</taxon>
        <taxon>Embryophyta</taxon>
        <taxon>Tracheophyta</taxon>
        <taxon>Spermatophyta</taxon>
        <taxon>Magnoliopsida</taxon>
        <taxon>Liliopsida</taxon>
        <taxon>Poales</taxon>
        <taxon>Poaceae</taxon>
        <taxon>BOP clade</taxon>
        <taxon>Oryzoideae</taxon>
        <taxon>Oryzeae</taxon>
        <taxon>Oryzinae</taxon>
        <taxon>Oryza</taxon>
        <taxon>Oryza sativa</taxon>
    </lineage>
</organism>
<protein>
    <recommendedName>
        <fullName evidence="5">Probable 3-ketoacyl-CoA synthase 20</fullName>
        <shortName evidence="4">OsKCS20</shortName>
        <ecNumber evidence="1">2.3.1.199</ecNumber>
    </recommendedName>
    <alternativeName>
        <fullName evidence="4">Protein SCREW FLAG LEAF 1</fullName>
    </alternativeName>
</protein>
<keyword id="KW-0012">Acyltransferase</keyword>
<keyword id="KW-0472">Membrane</keyword>
<keyword id="KW-1185">Reference proteome</keyword>
<keyword id="KW-0808">Transferase</keyword>
<keyword id="KW-0812">Transmembrane</keyword>
<keyword id="KW-1133">Transmembrane helix</keyword>
<proteinExistence type="evidence at protein level"/>
<comment type="function">
    <text evidence="1 3">Contributes to fatty acids elongation (By similarity). Plays a role in controlling leaf anatomy and plant architecture (Ref.5).</text>
</comment>
<comment type="catalytic activity">
    <reaction evidence="1">
        <text>a very-long-chain acyl-CoA + malonyl-CoA + H(+) = a very-long-chain 3-oxoacyl-CoA + CO2 + CoA</text>
        <dbReference type="Rhea" id="RHEA:32727"/>
        <dbReference type="ChEBI" id="CHEBI:15378"/>
        <dbReference type="ChEBI" id="CHEBI:16526"/>
        <dbReference type="ChEBI" id="CHEBI:57287"/>
        <dbReference type="ChEBI" id="CHEBI:57384"/>
        <dbReference type="ChEBI" id="CHEBI:90725"/>
        <dbReference type="ChEBI" id="CHEBI:90736"/>
        <dbReference type="EC" id="2.3.1.199"/>
    </reaction>
    <physiologicalReaction direction="left-to-right" evidence="1">
        <dbReference type="Rhea" id="RHEA:32728"/>
    </physiologicalReaction>
</comment>
<comment type="subcellular location">
    <subcellularLocation>
        <location evidence="2">Membrane</location>
        <topology evidence="2">Multi-pass membrane protein</topology>
    </subcellularLocation>
</comment>
<comment type="tissue specificity">
    <text evidence="3">Highly expressed in leaf sheaths (Ref.5). Expressed in leaves, flag leaves and panicles (Ref.5).</text>
</comment>
<comment type="similarity">
    <text evidence="5">Belongs to the thiolase-like superfamily. Chalcone/stilbene synthases family.</text>
</comment>
<comment type="sequence caution" evidence="5">
    <conflict type="erroneous gene model prediction">
        <sequence resource="EMBL-CDS" id="BAF26520"/>
    </conflict>
</comment>
<feature type="chain" id="PRO_0000448358" description="Probable 3-ketoacyl-CoA synthase 20">
    <location>
        <begin position="1"/>
        <end position="523"/>
    </location>
</feature>
<feature type="transmembrane region" description="Helical" evidence="2">
    <location>
        <begin position="31"/>
        <end position="55"/>
    </location>
</feature>
<feature type="transmembrane region" description="Helical" evidence="2">
    <location>
        <begin position="78"/>
        <end position="96"/>
    </location>
</feature>
<feature type="domain" description="FAE" evidence="2">
    <location>
        <begin position="93"/>
        <end position="382"/>
    </location>
</feature>
<feature type="active site" evidence="1">
    <location>
        <position position="237"/>
    </location>
</feature>
<feature type="active site" evidence="1">
    <location>
        <position position="317"/>
    </location>
</feature>
<feature type="active site" evidence="1">
    <location>
        <position position="401"/>
    </location>
</feature>
<feature type="active site" evidence="1">
    <location>
        <position position="405"/>
    </location>
</feature>
<feature type="active site" evidence="1">
    <location>
        <position position="438"/>
    </location>
</feature>
<feature type="mutagenesis site" description="In sfl1; screw flag leaf phenotype due to increased bulliform cell number and size, reduced plant height, flag leaf length and width, panicle length, and grain width." evidence="3">
    <original>A</original>
    <variation>V</variation>
    <location>
        <position position="406"/>
    </location>
</feature>
<gene>
    <name evidence="4" type="primary">KCS20</name>
    <name evidence="4" type="synonym">SFL1</name>
    <name evidence="7" type="ordered locus">Os10g0416200</name>
    <name evidence="6" type="ordered locus">LOC_Os10g28060</name>
</gene>
<sequence>MDRELVRTVKLATKNHAGVLFRRAVRHLPHIVAVTALVAAAPRLSTLLAAAAAGGSTMRWARALWSDLAGELGPSAPALAVACWAAALAAYTYAASRPRPVYLIDLAGYKAPREHEASRAKTIAHFGRCGRFSGESMAFQKRMLERSGLGEATHFPTSLISLPVDMCLRTAREESHAVIFGVVDEVLRKSGVAAADVGVLIFNSSLLSPTPSFTSLIVNRYGMRPGVVSHNLSGMGCSAGIIAIDLAKRLLQVHENTYALVVSTENITLNAYMGNNRPMLVTNTLFRVGGAAILLSNRAADRRGRAKYQLIHTVRTHRGAHDQSFGCVTQEEDDAGEVGVSLSKELMVVAGEALKTNITTLGPLVLPISEQLRFLATVVLKRVFRADVKAYLPDFKLALDHFCIHAGGRGVLDELEKSLKLSPWDMEPSRMTLYRFGNTSSSSLWYELAYCEAKGRIKRGDRVWQIAFGSGFKCNSAVWRALRTVDAAGLDAGDNPWMKEVDMLPVDVPKVAPIDETSYQIPN</sequence>